<feature type="signal peptide" evidence="1">
    <location>
        <begin position="1"/>
        <end position="19"/>
    </location>
</feature>
<feature type="chain" id="PRO_1000085053" description="Foldase protein PrsA">
    <location>
        <begin position="20"/>
        <end position="295"/>
    </location>
</feature>
<feature type="domain" description="PpiC" evidence="1">
    <location>
        <begin position="136"/>
        <end position="229"/>
    </location>
</feature>
<feature type="lipid moiety-binding region" description="N-palmitoyl cysteine" evidence="1">
    <location>
        <position position="20"/>
    </location>
</feature>
<feature type="lipid moiety-binding region" description="S-diacylglycerol cysteine" evidence="1">
    <location>
        <position position="20"/>
    </location>
</feature>
<sequence length="295" mass="32507">MKKVLIGFASIAMAFTLAACGNKTVATTSGGKITQDEYYSSLKNTTSGKQVLQEMIVNKVLEKQYGDKVSKKTVTKQYNSYKDQYGSSFKSILSSNGMTTSSLKTQIRSNLLLKEAVKANDKISNADLKKEWKSYEPKVTVAQILVSKKSTAEDIIKKLNDGGDFTKLAKQYSTDSSTKNKGGKIAAFDDTNSTLDSSFKKAAFKLDEGKYTTTPVKTEYGYQVIKMINKPSKGKMSDHTKELKERIWNADMSDSTTLRSVITKVLKKGNVTIKDKDLKNVLDDYLGSSASSSTK</sequence>
<reference key="1">
    <citation type="journal article" date="2006" name="Proc. Natl. Acad. Sci. U.S.A.">
        <title>Comparative genomics of the lactic acid bacteria.</title>
        <authorList>
            <person name="Makarova K.S."/>
            <person name="Slesarev A."/>
            <person name="Wolf Y.I."/>
            <person name="Sorokin A."/>
            <person name="Mirkin B."/>
            <person name="Koonin E.V."/>
            <person name="Pavlov A."/>
            <person name="Pavlova N."/>
            <person name="Karamychev V."/>
            <person name="Polouchine N."/>
            <person name="Shakhova V."/>
            <person name="Grigoriev I."/>
            <person name="Lou Y."/>
            <person name="Rohksar D."/>
            <person name="Lucas S."/>
            <person name="Huang K."/>
            <person name="Goodstein D.M."/>
            <person name="Hawkins T."/>
            <person name="Plengvidhya V."/>
            <person name="Welker D."/>
            <person name="Hughes J."/>
            <person name="Goh Y."/>
            <person name="Benson A."/>
            <person name="Baldwin K."/>
            <person name="Lee J.-H."/>
            <person name="Diaz-Muniz I."/>
            <person name="Dosti B."/>
            <person name="Smeianov V."/>
            <person name="Wechter W."/>
            <person name="Barabote R."/>
            <person name="Lorca G."/>
            <person name="Altermann E."/>
            <person name="Barrangou R."/>
            <person name="Ganesan B."/>
            <person name="Xie Y."/>
            <person name="Rawsthorne H."/>
            <person name="Tamir D."/>
            <person name="Parker C."/>
            <person name="Breidt F."/>
            <person name="Broadbent J.R."/>
            <person name="Hutkins R."/>
            <person name="O'Sullivan D."/>
            <person name="Steele J."/>
            <person name="Unlu G."/>
            <person name="Saier M.H. Jr."/>
            <person name="Klaenhammer T."/>
            <person name="Richardson P."/>
            <person name="Kozyavkin S."/>
            <person name="Weimer B.C."/>
            <person name="Mills D.A."/>
        </authorList>
    </citation>
    <scope>NUCLEOTIDE SEQUENCE [LARGE SCALE GENOMIC DNA]</scope>
    <source>
        <strain>ATCC 25745 / CCUG 21536 / LMG 10740 / 183-1w</strain>
    </source>
</reference>
<accession>Q03GD4</accession>
<name>PRSA_PEDPA</name>
<organism>
    <name type="scientific">Pediococcus pentosaceus (strain ATCC 25745 / CCUG 21536 / LMG 10740 / 183-1w)</name>
    <dbReference type="NCBI Taxonomy" id="278197"/>
    <lineage>
        <taxon>Bacteria</taxon>
        <taxon>Bacillati</taxon>
        <taxon>Bacillota</taxon>
        <taxon>Bacilli</taxon>
        <taxon>Lactobacillales</taxon>
        <taxon>Lactobacillaceae</taxon>
        <taxon>Pediococcus</taxon>
    </lineage>
</organism>
<protein>
    <recommendedName>
        <fullName evidence="1">Foldase protein PrsA</fullName>
        <ecNumber evidence="1">5.2.1.8</ecNumber>
    </recommendedName>
</protein>
<evidence type="ECO:0000255" key="1">
    <source>
        <dbReference type="HAMAP-Rule" id="MF_01145"/>
    </source>
</evidence>
<gene>
    <name evidence="1" type="primary">prsA</name>
    <name type="ordered locus">PEPE_0677</name>
</gene>
<comment type="function">
    <text evidence="1">Plays a major role in protein secretion by helping the post-translocational extracellular folding of several secreted proteins.</text>
</comment>
<comment type="catalytic activity">
    <reaction evidence="1">
        <text>[protein]-peptidylproline (omega=180) = [protein]-peptidylproline (omega=0)</text>
        <dbReference type="Rhea" id="RHEA:16237"/>
        <dbReference type="Rhea" id="RHEA-COMP:10747"/>
        <dbReference type="Rhea" id="RHEA-COMP:10748"/>
        <dbReference type="ChEBI" id="CHEBI:83833"/>
        <dbReference type="ChEBI" id="CHEBI:83834"/>
        <dbReference type="EC" id="5.2.1.8"/>
    </reaction>
</comment>
<comment type="subcellular location">
    <subcellularLocation>
        <location evidence="1">Cell membrane</location>
        <topology evidence="1">Lipid-anchor</topology>
    </subcellularLocation>
</comment>
<comment type="similarity">
    <text evidence="1">Belongs to the PrsA family.</text>
</comment>
<dbReference type="EC" id="5.2.1.8" evidence="1"/>
<dbReference type="EMBL" id="CP000422">
    <property type="protein sequence ID" value="ABJ67738.1"/>
    <property type="molecule type" value="Genomic_DNA"/>
</dbReference>
<dbReference type="RefSeq" id="WP_011673201.1">
    <property type="nucleotide sequence ID" value="NC_008525.1"/>
</dbReference>
<dbReference type="SMR" id="Q03GD4"/>
<dbReference type="STRING" id="278197.PEPE_0677"/>
<dbReference type="GeneID" id="33062971"/>
<dbReference type="KEGG" id="ppe:PEPE_0677"/>
<dbReference type="eggNOG" id="COG0760">
    <property type="taxonomic scope" value="Bacteria"/>
</dbReference>
<dbReference type="HOGENOM" id="CLU_034646_6_1_9"/>
<dbReference type="OrthoDB" id="14196at2"/>
<dbReference type="Proteomes" id="UP000000773">
    <property type="component" value="Chromosome"/>
</dbReference>
<dbReference type="GO" id="GO:0005886">
    <property type="term" value="C:plasma membrane"/>
    <property type="evidence" value="ECO:0007669"/>
    <property type="project" value="UniProtKB-SubCell"/>
</dbReference>
<dbReference type="GO" id="GO:0003755">
    <property type="term" value="F:peptidyl-prolyl cis-trans isomerase activity"/>
    <property type="evidence" value="ECO:0007669"/>
    <property type="project" value="UniProtKB-UniRule"/>
</dbReference>
<dbReference type="GO" id="GO:0006457">
    <property type="term" value="P:protein folding"/>
    <property type="evidence" value="ECO:0007669"/>
    <property type="project" value="UniProtKB-UniRule"/>
</dbReference>
<dbReference type="Gene3D" id="3.10.50.40">
    <property type="match status" value="1"/>
</dbReference>
<dbReference type="HAMAP" id="MF_01145">
    <property type="entry name" value="Foldase_PrsA"/>
    <property type="match status" value="1"/>
</dbReference>
<dbReference type="InterPro" id="IPR023059">
    <property type="entry name" value="Foldase_PrsA"/>
</dbReference>
<dbReference type="InterPro" id="IPR046357">
    <property type="entry name" value="PPIase_dom_sf"/>
</dbReference>
<dbReference type="InterPro" id="IPR000297">
    <property type="entry name" value="PPIase_PpiC"/>
</dbReference>
<dbReference type="InterPro" id="IPR050245">
    <property type="entry name" value="PrsA_foldase"/>
</dbReference>
<dbReference type="InterPro" id="IPR027304">
    <property type="entry name" value="Trigger_fact/SurA_dom_sf"/>
</dbReference>
<dbReference type="NCBIfam" id="NF003356">
    <property type="entry name" value="PRK04405.1"/>
    <property type="match status" value="1"/>
</dbReference>
<dbReference type="PANTHER" id="PTHR47245:SF1">
    <property type="entry name" value="FOLDASE PROTEIN PRSA"/>
    <property type="match status" value="1"/>
</dbReference>
<dbReference type="PANTHER" id="PTHR47245">
    <property type="entry name" value="PEPTIDYLPROLYL ISOMERASE"/>
    <property type="match status" value="1"/>
</dbReference>
<dbReference type="Pfam" id="PF13616">
    <property type="entry name" value="Rotamase_3"/>
    <property type="match status" value="1"/>
</dbReference>
<dbReference type="SUPFAM" id="SSF54534">
    <property type="entry name" value="FKBP-like"/>
    <property type="match status" value="1"/>
</dbReference>
<dbReference type="SUPFAM" id="SSF109998">
    <property type="entry name" value="Triger factor/SurA peptide-binding domain-like"/>
    <property type="match status" value="1"/>
</dbReference>
<dbReference type="PROSITE" id="PS50198">
    <property type="entry name" value="PPIC_PPIASE_2"/>
    <property type="match status" value="1"/>
</dbReference>
<dbReference type="PROSITE" id="PS51257">
    <property type="entry name" value="PROKAR_LIPOPROTEIN"/>
    <property type="match status" value="1"/>
</dbReference>
<keyword id="KW-1003">Cell membrane</keyword>
<keyword id="KW-0413">Isomerase</keyword>
<keyword id="KW-0449">Lipoprotein</keyword>
<keyword id="KW-0472">Membrane</keyword>
<keyword id="KW-0564">Palmitate</keyword>
<keyword id="KW-0697">Rotamase</keyword>
<keyword id="KW-0732">Signal</keyword>
<proteinExistence type="inferred from homology"/>